<sequence>MPKPLVDFGNKPMILHQIEALKGAGVTEVVLAINHQQPEVMLNFVKEYEKKLEIKITFSQETEPLGTAGPLALARDKLVDESGQPFFVLNSDVICEYPLLEMIEFHKTNRAEASIMVTEVDDPSKYGVVVTEEGTARVESFVEKPKHFVGNKINAGIYLLSPSVLDRIELRRTSIEKEIFPKIASEKKLYAMVLPGFWMDIGQPKDYITGQRMYLNSLREKTPQELATGDNIIGNVLVHESAVIGEGCLIGPDVVIGPGCVIDSGVRLFGCTVMRGVWIKEHACISNSIVGWDSTVGRWARVFNITVLGKDVNVADAEVYNSGVVIEEQGL</sequence>
<keyword id="KW-0342">GTP-binding</keyword>
<keyword id="KW-0547">Nucleotide-binding</keyword>
<keyword id="KW-0548">Nucleotidyltransferase</keyword>
<keyword id="KW-1185">Reference proteome</keyword>
<keyword id="KW-0808">Transferase</keyword>
<organism>
    <name type="scientific">Arabidopsis thaliana</name>
    <name type="common">Mouse-ear cress</name>
    <dbReference type="NCBI Taxonomy" id="3702"/>
    <lineage>
        <taxon>Eukaryota</taxon>
        <taxon>Viridiplantae</taxon>
        <taxon>Streptophyta</taxon>
        <taxon>Embryophyta</taxon>
        <taxon>Tracheophyta</taxon>
        <taxon>Spermatophyta</taxon>
        <taxon>Magnoliopsida</taxon>
        <taxon>eudicotyledons</taxon>
        <taxon>Gunneridae</taxon>
        <taxon>Pentapetalae</taxon>
        <taxon>rosids</taxon>
        <taxon>malvids</taxon>
        <taxon>Brassicales</taxon>
        <taxon>Brassicaceae</taxon>
        <taxon>Camelineae</taxon>
        <taxon>Arabidopsis</taxon>
    </lineage>
</organism>
<dbReference type="EC" id="2.7.7.13"/>
<dbReference type="EMBL" id="AL161577">
    <property type="protein sequence ID" value="CAB79775.1"/>
    <property type="status" value="ALT_INIT"/>
    <property type="molecule type" value="Genomic_DNA"/>
</dbReference>
<dbReference type="EMBL" id="CP002687">
    <property type="protein sequence ID" value="AEE85782.1"/>
    <property type="molecule type" value="Genomic_DNA"/>
</dbReference>
<dbReference type="EMBL" id="AY142530">
    <property type="protein sequence ID" value="AAN13073.1"/>
    <property type="molecule type" value="mRNA"/>
</dbReference>
<dbReference type="PIR" id="F85357">
    <property type="entry name" value="F85357"/>
</dbReference>
<dbReference type="RefSeq" id="NP_194786.1">
    <property type="nucleotide sequence ID" value="NM_119203.3"/>
</dbReference>
<dbReference type="SMR" id="Q8H1Q7"/>
<dbReference type="FunCoup" id="Q8H1Q7">
    <property type="interactions" value="2940"/>
</dbReference>
<dbReference type="STRING" id="3702.Q8H1Q7"/>
<dbReference type="iPTMnet" id="Q8H1Q7"/>
<dbReference type="PaxDb" id="3702-AT4G30570.1"/>
<dbReference type="EnsemblPlants" id="AT4G30570.1">
    <property type="protein sequence ID" value="AT4G30570.1"/>
    <property type="gene ID" value="AT4G30570"/>
</dbReference>
<dbReference type="GeneID" id="829180"/>
<dbReference type="Gramene" id="AT4G30570.1">
    <property type="protein sequence ID" value="AT4G30570.1"/>
    <property type="gene ID" value="AT4G30570"/>
</dbReference>
<dbReference type="KEGG" id="ath:AT4G30570"/>
<dbReference type="Araport" id="AT4G30570"/>
<dbReference type="TAIR" id="AT4G30570"/>
<dbReference type="eggNOG" id="KOG1322">
    <property type="taxonomic scope" value="Eukaryota"/>
</dbReference>
<dbReference type="HOGENOM" id="CLU_029499_0_0_1"/>
<dbReference type="InParanoid" id="Q8H1Q7"/>
<dbReference type="OMA" id="CISNSIV"/>
<dbReference type="BRENDA" id="2.7.7.13">
    <property type="organism ID" value="399"/>
</dbReference>
<dbReference type="UniPathway" id="UPA00126">
    <property type="reaction ID" value="UER00930"/>
</dbReference>
<dbReference type="PRO" id="PR:Q8H1Q7"/>
<dbReference type="Proteomes" id="UP000006548">
    <property type="component" value="Chromosome 4"/>
</dbReference>
<dbReference type="ExpressionAtlas" id="Q8H1Q7">
    <property type="expression patterns" value="baseline and differential"/>
</dbReference>
<dbReference type="GO" id="GO:0005737">
    <property type="term" value="C:cytoplasm"/>
    <property type="evidence" value="ECO:0007669"/>
    <property type="project" value="UniProtKB-ARBA"/>
</dbReference>
<dbReference type="GO" id="GO:0005525">
    <property type="term" value="F:GTP binding"/>
    <property type="evidence" value="ECO:0007669"/>
    <property type="project" value="UniProtKB-KW"/>
</dbReference>
<dbReference type="GO" id="GO:0004475">
    <property type="term" value="F:mannose-1-phosphate guanylyltransferase (GTP) activity"/>
    <property type="evidence" value="ECO:0007669"/>
    <property type="project" value="UniProtKB-EC"/>
</dbReference>
<dbReference type="GO" id="GO:0009298">
    <property type="term" value="P:GDP-mannose biosynthetic process"/>
    <property type="evidence" value="ECO:0007669"/>
    <property type="project" value="UniProtKB-UniPathway"/>
</dbReference>
<dbReference type="CDD" id="cd06425">
    <property type="entry name" value="M1P_guanylylT_B_like_N"/>
    <property type="match status" value="1"/>
</dbReference>
<dbReference type="FunFam" id="3.90.550.10:FF:000013">
    <property type="entry name" value="mannose-1-phosphate guanyltransferase beta"/>
    <property type="match status" value="1"/>
</dbReference>
<dbReference type="Gene3D" id="2.160.10.10">
    <property type="entry name" value="Hexapeptide repeat proteins"/>
    <property type="match status" value="1"/>
</dbReference>
<dbReference type="Gene3D" id="3.90.550.10">
    <property type="entry name" value="Spore Coat Polysaccharide Biosynthesis Protein SpsA, Chain A"/>
    <property type="match status" value="1"/>
</dbReference>
<dbReference type="InterPro" id="IPR056729">
    <property type="entry name" value="GMPPB_C"/>
</dbReference>
<dbReference type="InterPro" id="IPR045233">
    <property type="entry name" value="GMPPB_N"/>
</dbReference>
<dbReference type="InterPro" id="IPR050486">
    <property type="entry name" value="Mannose-1P_guanyltransferase"/>
</dbReference>
<dbReference type="InterPro" id="IPR005835">
    <property type="entry name" value="NTP_transferase_dom"/>
</dbReference>
<dbReference type="InterPro" id="IPR029044">
    <property type="entry name" value="Nucleotide-diphossugar_trans"/>
</dbReference>
<dbReference type="PANTHER" id="PTHR22572">
    <property type="entry name" value="SUGAR-1-PHOSPHATE GUANYL TRANSFERASE"/>
    <property type="match status" value="1"/>
</dbReference>
<dbReference type="Pfam" id="PF25087">
    <property type="entry name" value="GMPPB_C"/>
    <property type="match status" value="1"/>
</dbReference>
<dbReference type="Pfam" id="PF00483">
    <property type="entry name" value="NTP_transferase"/>
    <property type="match status" value="1"/>
</dbReference>
<dbReference type="SUPFAM" id="SSF53448">
    <property type="entry name" value="Nucleotide-diphospho-sugar transferases"/>
    <property type="match status" value="1"/>
</dbReference>
<protein>
    <recommendedName>
        <fullName>Probable mannose-1-phosphate guanylyltransferase 3</fullName>
        <ecNumber>2.7.7.13</ecNumber>
    </recommendedName>
</protein>
<evidence type="ECO:0000250" key="1"/>
<evidence type="ECO:0000250" key="2">
    <source>
        <dbReference type="UniProtKB" id="O22287"/>
    </source>
</evidence>
<evidence type="ECO:0000305" key="3"/>
<comment type="function">
    <text evidence="1">Catalyzes a reaction of the Smirnoff-Wheeler pathway, the major route to ascorbate biosynthesis in plants.</text>
</comment>
<comment type="catalytic activity">
    <reaction>
        <text>alpha-D-mannose 1-phosphate + GTP + H(+) = GDP-alpha-D-mannose + diphosphate</text>
        <dbReference type="Rhea" id="RHEA:15229"/>
        <dbReference type="ChEBI" id="CHEBI:15378"/>
        <dbReference type="ChEBI" id="CHEBI:33019"/>
        <dbReference type="ChEBI" id="CHEBI:37565"/>
        <dbReference type="ChEBI" id="CHEBI:57527"/>
        <dbReference type="ChEBI" id="CHEBI:58409"/>
        <dbReference type="EC" id="2.7.7.13"/>
    </reaction>
</comment>
<comment type="pathway">
    <text>Nucleotide-sugar biosynthesis; GDP-alpha-D-mannose biosynthesis; GDP-alpha-D-mannose from alpha-D-mannose 1-phosphate (GTP route): step 1/1.</text>
</comment>
<comment type="similarity">
    <text evidence="3">Belongs to the transferase hexapeptide repeat family.</text>
</comment>
<comment type="sequence caution" evidence="3">
    <conflict type="erroneous initiation">
        <sequence resource="EMBL-CDS" id="CAB79775"/>
    </conflict>
    <text>Extended N-terminus.</text>
</comment>
<name>GMPP3_ARATH</name>
<reference key="1">
    <citation type="journal article" date="1999" name="Nature">
        <title>Sequence and analysis of chromosome 4 of the plant Arabidopsis thaliana.</title>
        <authorList>
            <person name="Mayer K.F.X."/>
            <person name="Schueller C."/>
            <person name="Wambutt R."/>
            <person name="Murphy G."/>
            <person name="Volckaert G."/>
            <person name="Pohl T."/>
            <person name="Duesterhoeft A."/>
            <person name="Stiekema W."/>
            <person name="Entian K.-D."/>
            <person name="Terryn N."/>
            <person name="Harris B."/>
            <person name="Ansorge W."/>
            <person name="Brandt P."/>
            <person name="Grivell L.A."/>
            <person name="Rieger M."/>
            <person name="Weichselgartner M."/>
            <person name="de Simone V."/>
            <person name="Obermaier B."/>
            <person name="Mache R."/>
            <person name="Mueller M."/>
            <person name="Kreis M."/>
            <person name="Delseny M."/>
            <person name="Puigdomenech P."/>
            <person name="Watson M."/>
            <person name="Schmidtheini T."/>
            <person name="Reichert B."/>
            <person name="Portetelle D."/>
            <person name="Perez-Alonso M."/>
            <person name="Boutry M."/>
            <person name="Bancroft I."/>
            <person name="Vos P."/>
            <person name="Hoheisel J."/>
            <person name="Zimmermann W."/>
            <person name="Wedler H."/>
            <person name="Ridley P."/>
            <person name="Langham S.-A."/>
            <person name="McCullagh B."/>
            <person name="Bilham L."/>
            <person name="Robben J."/>
            <person name="van der Schueren J."/>
            <person name="Grymonprez B."/>
            <person name="Chuang Y.-J."/>
            <person name="Vandenbussche F."/>
            <person name="Braeken M."/>
            <person name="Weltjens I."/>
            <person name="Voet M."/>
            <person name="Bastiaens I."/>
            <person name="Aert R."/>
            <person name="Defoor E."/>
            <person name="Weitzenegger T."/>
            <person name="Bothe G."/>
            <person name="Ramsperger U."/>
            <person name="Hilbert H."/>
            <person name="Braun M."/>
            <person name="Holzer E."/>
            <person name="Brandt A."/>
            <person name="Peters S."/>
            <person name="van Staveren M."/>
            <person name="Dirkse W."/>
            <person name="Mooijman P."/>
            <person name="Klein Lankhorst R."/>
            <person name="Rose M."/>
            <person name="Hauf J."/>
            <person name="Koetter P."/>
            <person name="Berneiser S."/>
            <person name="Hempel S."/>
            <person name="Feldpausch M."/>
            <person name="Lamberth S."/>
            <person name="Van den Daele H."/>
            <person name="De Keyser A."/>
            <person name="Buysshaert C."/>
            <person name="Gielen J."/>
            <person name="Villarroel R."/>
            <person name="De Clercq R."/>
            <person name="van Montagu M."/>
            <person name="Rogers J."/>
            <person name="Cronin A."/>
            <person name="Quail M.A."/>
            <person name="Bray-Allen S."/>
            <person name="Clark L."/>
            <person name="Doggett J."/>
            <person name="Hall S."/>
            <person name="Kay M."/>
            <person name="Lennard N."/>
            <person name="McLay K."/>
            <person name="Mayes R."/>
            <person name="Pettett A."/>
            <person name="Rajandream M.A."/>
            <person name="Lyne M."/>
            <person name="Benes V."/>
            <person name="Rechmann S."/>
            <person name="Borkova D."/>
            <person name="Bloecker H."/>
            <person name="Scharfe M."/>
            <person name="Grimm M."/>
            <person name="Loehnert T.-H."/>
            <person name="Dose S."/>
            <person name="de Haan M."/>
            <person name="Maarse A.C."/>
            <person name="Schaefer M."/>
            <person name="Mueller-Auer S."/>
            <person name="Gabel C."/>
            <person name="Fuchs M."/>
            <person name="Fartmann B."/>
            <person name="Granderath K."/>
            <person name="Dauner D."/>
            <person name="Herzl A."/>
            <person name="Neumann S."/>
            <person name="Argiriou A."/>
            <person name="Vitale D."/>
            <person name="Liguori R."/>
            <person name="Piravandi E."/>
            <person name="Massenet O."/>
            <person name="Quigley F."/>
            <person name="Clabauld G."/>
            <person name="Muendlein A."/>
            <person name="Felber R."/>
            <person name="Schnabl S."/>
            <person name="Hiller R."/>
            <person name="Schmidt W."/>
            <person name="Lecharny A."/>
            <person name="Aubourg S."/>
            <person name="Chefdor F."/>
            <person name="Cooke R."/>
            <person name="Berger C."/>
            <person name="Monfort A."/>
            <person name="Casacuberta E."/>
            <person name="Gibbons T."/>
            <person name="Weber N."/>
            <person name="Vandenbol M."/>
            <person name="Bargues M."/>
            <person name="Terol J."/>
            <person name="Torres A."/>
            <person name="Perez-Perez A."/>
            <person name="Purnelle B."/>
            <person name="Bent E."/>
            <person name="Johnson S."/>
            <person name="Tacon D."/>
            <person name="Jesse T."/>
            <person name="Heijnen L."/>
            <person name="Schwarz S."/>
            <person name="Scholler P."/>
            <person name="Heber S."/>
            <person name="Francs P."/>
            <person name="Bielke C."/>
            <person name="Frishman D."/>
            <person name="Haase D."/>
            <person name="Lemcke K."/>
            <person name="Mewes H.-W."/>
            <person name="Stocker S."/>
            <person name="Zaccaria P."/>
            <person name="Bevan M."/>
            <person name="Wilson R.K."/>
            <person name="de la Bastide M."/>
            <person name="Habermann K."/>
            <person name="Parnell L."/>
            <person name="Dedhia N."/>
            <person name="Gnoj L."/>
            <person name="Schutz K."/>
            <person name="Huang E."/>
            <person name="Spiegel L."/>
            <person name="Sekhon M."/>
            <person name="Murray J."/>
            <person name="Sheet P."/>
            <person name="Cordes M."/>
            <person name="Abu-Threideh J."/>
            <person name="Stoneking T."/>
            <person name="Kalicki J."/>
            <person name="Graves T."/>
            <person name="Harmon G."/>
            <person name="Edwards J."/>
            <person name="Latreille P."/>
            <person name="Courtney L."/>
            <person name="Cloud J."/>
            <person name="Abbott A."/>
            <person name="Scott K."/>
            <person name="Johnson D."/>
            <person name="Minx P."/>
            <person name="Bentley D."/>
            <person name="Fulton B."/>
            <person name="Miller N."/>
            <person name="Greco T."/>
            <person name="Kemp K."/>
            <person name="Kramer J."/>
            <person name="Fulton L."/>
            <person name="Mardis E."/>
            <person name="Dante M."/>
            <person name="Pepin K."/>
            <person name="Hillier L.W."/>
            <person name="Nelson J."/>
            <person name="Spieth J."/>
            <person name="Ryan E."/>
            <person name="Andrews S."/>
            <person name="Geisel C."/>
            <person name="Layman D."/>
            <person name="Du H."/>
            <person name="Ali J."/>
            <person name="Berghoff A."/>
            <person name="Jones K."/>
            <person name="Drone K."/>
            <person name="Cotton M."/>
            <person name="Joshu C."/>
            <person name="Antonoiu B."/>
            <person name="Zidanic M."/>
            <person name="Strong C."/>
            <person name="Sun H."/>
            <person name="Lamar B."/>
            <person name="Yordan C."/>
            <person name="Ma P."/>
            <person name="Zhong J."/>
            <person name="Preston R."/>
            <person name="Vil D."/>
            <person name="Shekher M."/>
            <person name="Matero A."/>
            <person name="Shah R."/>
            <person name="Swaby I.K."/>
            <person name="O'Shaughnessy A."/>
            <person name="Rodriguez M."/>
            <person name="Hoffman J."/>
            <person name="Till S."/>
            <person name="Granat S."/>
            <person name="Shohdy N."/>
            <person name="Hasegawa A."/>
            <person name="Hameed A."/>
            <person name="Lodhi M."/>
            <person name="Johnson A."/>
            <person name="Chen E."/>
            <person name="Marra M.A."/>
            <person name="Martienssen R."/>
            <person name="McCombie W.R."/>
        </authorList>
    </citation>
    <scope>NUCLEOTIDE SEQUENCE [LARGE SCALE GENOMIC DNA]</scope>
    <source>
        <strain>cv. Columbia</strain>
    </source>
</reference>
<reference key="2">
    <citation type="journal article" date="2017" name="Plant J.">
        <title>Araport11: a complete reannotation of the Arabidopsis thaliana reference genome.</title>
        <authorList>
            <person name="Cheng C.Y."/>
            <person name="Krishnakumar V."/>
            <person name="Chan A.P."/>
            <person name="Thibaud-Nissen F."/>
            <person name="Schobel S."/>
            <person name="Town C.D."/>
        </authorList>
    </citation>
    <scope>GENOME REANNOTATION</scope>
    <source>
        <strain>cv. Columbia</strain>
    </source>
</reference>
<reference key="3">
    <citation type="journal article" date="2003" name="Science">
        <title>Empirical analysis of transcriptional activity in the Arabidopsis genome.</title>
        <authorList>
            <person name="Yamada K."/>
            <person name="Lim J."/>
            <person name="Dale J.M."/>
            <person name="Chen H."/>
            <person name="Shinn P."/>
            <person name="Palm C.J."/>
            <person name="Southwick A.M."/>
            <person name="Wu H.C."/>
            <person name="Kim C.J."/>
            <person name="Nguyen M."/>
            <person name="Pham P.K."/>
            <person name="Cheuk R.F."/>
            <person name="Karlin-Newmann G."/>
            <person name="Liu S.X."/>
            <person name="Lam B."/>
            <person name="Sakano H."/>
            <person name="Wu T."/>
            <person name="Yu G."/>
            <person name="Miranda M."/>
            <person name="Quach H.L."/>
            <person name="Tripp M."/>
            <person name="Chang C.H."/>
            <person name="Lee J.M."/>
            <person name="Toriumi M.J."/>
            <person name="Chan M.M."/>
            <person name="Tang C.C."/>
            <person name="Onodera C.S."/>
            <person name="Deng J.M."/>
            <person name="Akiyama K."/>
            <person name="Ansari Y."/>
            <person name="Arakawa T."/>
            <person name="Banh J."/>
            <person name="Banno F."/>
            <person name="Bowser L."/>
            <person name="Brooks S.Y."/>
            <person name="Carninci P."/>
            <person name="Chao Q."/>
            <person name="Choy N."/>
            <person name="Enju A."/>
            <person name="Goldsmith A.D."/>
            <person name="Gurjal M."/>
            <person name="Hansen N.F."/>
            <person name="Hayashizaki Y."/>
            <person name="Johnson-Hopson C."/>
            <person name="Hsuan V.W."/>
            <person name="Iida K."/>
            <person name="Karnes M."/>
            <person name="Khan S."/>
            <person name="Koesema E."/>
            <person name="Ishida J."/>
            <person name="Jiang P.X."/>
            <person name="Jones T."/>
            <person name="Kawai J."/>
            <person name="Kamiya A."/>
            <person name="Meyers C."/>
            <person name="Nakajima M."/>
            <person name="Narusaka M."/>
            <person name="Seki M."/>
            <person name="Sakurai T."/>
            <person name="Satou M."/>
            <person name="Tamse R."/>
            <person name="Vaysberg M."/>
            <person name="Wallender E.K."/>
            <person name="Wong C."/>
            <person name="Yamamura Y."/>
            <person name="Yuan S."/>
            <person name="Shinozaki K."/>
            <person name="Davis R.W."/>
            <person name="Theologis A."/>
            <person name="Ecker J.R."/>
        </authorList>
    </citation>
    <scope>NUCLEOTIDE SEQUENCE [LARGE SCALE MRNA]</scope>
    <source>
        <strain>cv. Columbia</strain>
    </source>
</reference>
<proteinExistence type="evidence at transcript level"/>
<accession>Q8H1Q7</accession>
<accession>Q9M0A3</accession>
<gene>
    <name type="ordered locus">At4g30570</name>
    <name type="ORF">F17I23.90</name>
</gene>
<feature type="chain" id="PRO_0000412468" description="Probable mannose-1-phosphate guanylyltransferase 3">
    <location>
        <begin position="1"/>
        <end position="331"/>
    </location>
</feature>
<feature type="binding site" evidence="2">
    <location>
        <position position="3"/>
    </location>
    <ligand>
        <name>diphosphate</name>
        <dbReference type="ChEBI" id="CHEBI:33019"/>
    </ligand>
</feature>
<feature type="binding site" evidence="2">
    <location>
        <position position="66"/>
    </location>
    <ligand>
        <name>GDP-alpha-D-mannose</name>
        <dbReference type="ChEBI" id="CHEBI:57527"/>
    </ligand>
</feature>
<feature type="binding site" evidence="2">
    <location>
        <position position="90"/>
    </location>
    <ligand>
        <name>GDP-alpha-D-mannose</name>
        <dbReference type="ChEBI" id="CHEBI:57527"/>
    </ligand>
</feature>
<feature type="binding site" evidence="2">
    <location>
        <position position="92"/>
    </location>
    <ligand>
        <name>GDP-alpha-D-mannose</name>
        <dbReference type="ChEBI" id="CHEBI:57527"/>
    </ligand>
</feature>
<feature type="binding site" evidence="2">
    <location>
        <position position="127"/>
    </location>
    <ligand>
        <name>GDP-alpha-D-mannose</name>
        <dbReference type="ChEBI" id="CHEBI:57527"/>
    </ligand>
</feature>
<feature type="binding site" evidence="2">
    <location>
        <position position="154"/>
    </location>
    <ligand>
        <name>GDP-alpha-D-mannose</name>
        <dbReference type="ChEBI" id="CHEBI:57527"/>
    </ligand>
</feature>